<comment type="function">
    <text evidence="1 5 6">Receptor for angiotensin II, a vasoconstricting peptide (PubMed:8726696). Signals primarily via a non-canonical G-protein- and beta-arrestin independent pathways (By similarity). Cooperates with MTUS1 to inhibit ERK2 activation and cell proliferation (PubMed:15539617).</text>
</comment>
<comment type="subunit">
    <text evidence="5">Interacts with MTUS1.</text>
</comment>
<comment type="subcellular location">
    <subcellularLocation>
        <location evidence="5">Cell membrane</location>
        <topology evidence="1">Multi-pass membrane protein</topology>
    </subcellularLocation>
</comment>
<comment type="tissue specificity">
    <text evidence="5">Expressed at highest levels in adrenal gland and uterus.</text>
</comment>
<comment type="domain">
    <text evidence="1">Helix VIII may act as a gatekeeper for either suppression or activation of the receptor, depending on post-translational modifications and interactions with various receptor partners. Helix VIII is found in a non-canonical position, stabilizing the active-like state, but at the same time preventing the recruitment of G-proteins or beta-arrestins. Upon switching to a membrane-bound conformation, helix VIII can support the recruitment of G proteins and beta-arrestins.</text>
</comment>
<comment type="similarity">
    <text evidence="3">Belongs to the G-protein coupled receptor 1 family.</text>
</comment>
<comment type="sequence caution" evidence="9">
    <conflict type="erroneous initiation">
        <sequence resource="EMBL-CDS" id="AAB49539"/>
    </conflict>
</comment>
<feature type="chain" id="PRO_0000069169" description="Type-2 angiotensin II receptor">
    <location>
        <begin position="1"/>
        <end position="363"/>
    </location>
</feature>
<feature type="topological domain" description="Extracellular" evidence="1">
    <location>
        <begin position="1"/>
        <end position="45"/>
    </location>
</feature>
<feature type="transmembrane region" description="Helical; Name=1" evidence="1">
    <location>
        <begin position="46"/>
        <end position="70"/>
    </location>
</feature>
<feature type="topological domain" description="Cytoplasmic" evidence="1">
    <location>
        <begin position="71"/>
        <end position="80"/>
    </location>
</feature>
<feature type="transmembrane region" description="Helical; Name=2" evidence="1">
    <location>
        <begin position="81"/>
        <end position="104"/>
    </location>
</feature>
<feature type="topological domain" description="Extracellular" evidence="1">
    <location>
        <begin position="105"/>
        <end position="114"/>
    </location>
</feature>
<feature type="transmembrane region" description="Helical; Name=3" evidence="1">
    <location>
        <begin position="115"/>
        <end position="140"/>
    </location>
</feature>
<feature type="topological domain" description="Cytoplasmic" evidence="1">
    <location>
        <begin position="141"/>
        <end position="159"/>
    </location>
</feature>
<feature type="transmembrane region" description="Helical; Name=4" evidence="1">
    <location>
        <begin position="160"/>
        <end position="181"/>
    </location>
</feature>
<feature type="topological domain" description="Extracellular" evidence="1">
    <location>
        <begin position="182"/>
        <end position="206"/>
    </location>
</feature>
<feature type="transmembrane region" description="Helical; Name=5" evidence="1">
    <location>
        <begin position="207"/>
        <end position="232"/>
    </location>
</feature>
<feature type="topological domain" description="Cytoplasmic" evidence="1">
    <location>
        <begin position="233"/>
        <end position="257"/>
    </location>
</feature>
<feature type="transmembrane region" description="Helical; Name=6" evidence="1">
    <location>
        <begin position="258"/>
        <end position="281"/>
    </location>
</feature>
<feature type="topological domain" description="Extracellular" evidence="1">
    <location>
        <begin position="282"/>
        <end position="294"/>
    </location>
</feature>
<feature type="transmembrane region" description="Helical; Name=7" evidence="1">
    <location>
        <begin position="295"/>
        <end position="320"/>
    </location>
</feature>
<feature type="topological domain" description="Cytoplasmic" evidence="1">
    <location>
        <begin position="321"/>
        <end position="363"/>
    </location>
</feature>
<feature type="region of interest" description="Helix VIII" evidence="1">
    <location>
        <begin position="324"/>
        <end position="333"/>
    </location>
</feature>
<feature type="binding site" evidence="1">
    <location>
        <position position="103"/>
    </location>
    <ligand>
        <name>angiotensin II</name>
        <dbReference type="ChEBI" id="CHEBI:58506"/>
    </ligand>
</feature>
<feature type="binding site" evidence="1">
    <location>
        <position position="104"/>
    </location>
    <ligand>
        <name>angiotensin II</name>
        <dbReference type="ChEBI" id="CHEBI:58506"/>
    </ligand>
</feature>
<feature type="binding site" evidence="1">
    <location>
        <position position="182"/>
    </location>
    <ligand>
        <name>angiotensin II</name>
        <dbReference type="ChEBI" id="CHEBI:58506"/>
    </ligand>
</feature>
<feature type="binding site" evidence="1">
    <location>
        <position position="204"/>
    </location>
    <ligand>
        <name>angiotensin II</name>
        <dbReference type="ChEBI" id="CHEBI:58506"/>
    </ligand>
</feature>
<feature type="binding site" evidence="1">
    <location>
        <position position="215"/>
    </location>
    <ligand>
        <name>angiotensin II</name>
        <dbReference type="ChEBI" id="CHEBI:58506"/>
    </ligand>
</feature>
<feature type="binding site" evidence="1">
    <location>
        <position position="279"/>
    </location>
    <ligand>
        <name>angiotensin II</name>
        <dbReference type="ChEBI" id="CHEBI:58506"/>
    </ligand>
</feature>
<feature type="binding site" evidence="1">
    <location>
        <position position="297"/>
    </location>
    <ligand>
        <name>angiotensin II</name>
        <dbReference type="ChEBI" id="CHEBI:58506"/>
    </ligand>
</feature>
<feature type="modified residue" description="Phosphoserine; by PKC" evidence="2">
    <location>
        <position position="354"/>
    </location>
</feature>
<feature type="glycosylation site" description="N-linked (GlcNAc...) asparagine" evidence="2">
    <location>
        <position position="4"/>
    </location>
</feature>
<feature type="glycosylation site" description="N-linked (GlcNAc...) asparagine" evidence="2">
    <location>
        <position position="13"/>
    </location>
</feature>
<feature type="glycosylation site" description="N-linked (GlcNAc...) asparagine" evidence="2">
    <location>
        <position position="24"/>
    </location>
</feature>
<feature type="glycosylation site" description="N-linked (GlcNAc...) asparagine" evidence="2">
    <location>
        <position position="29"/>
    </location>
</feature>
<feature type="glycosylation site" description="N-linked (GlcNAc...) asparagine" evidence="2">
    <location>
        <position position="34"/>
    </location>
</feature>
<feature type="disulfide bond" evidence="3 4">
    <location>
        <begin position="35"/>
        <end position="290"/>
    </location>
</feature>
<feature type="disulfide bond" evidence="3 4">
    <location>
        <begin position="117"/>
        <end position="195"/>
    </location>
</feature>
<reference key="1">
    <citation type="journal article" date="1993" name="Biochem. Biophys. Res. Commun.">
        <title>Cloning of cDNA and analysis of the gene for mouse angiotensin II type 2 receptor.</title>
        <authorList>
            <person name="Nakajima M."/>
            <person name="Mukoyama M."/>
            <person name="Pratt R.E."/>
            <person name="Horiuchi M."/>
            <person name="Dzau V.J."/>
        </authorList>
    </citation>
    <scope>NUCLEOTIDE SEQUENCE [MRNA]</scope>
    <source>
        <strain>BALB/cJ</strain>
        <tissue>Fetus</tissue>
    </source>
</reference>
<reference key="2">
    <citation type="journal article" date="1994" name="Biochim. Biophys. Acta">
        <title>Cloning of the cDNA and the genomic DNA of the mouse angiotensin II type 2 receptor.</title>
        <authorList>
            <person name="Ichiki T."/>
            <person name="Herold C.L."/>
            <person name="Kambayashi Y."/>
            <person name="Bardhan S."/>
            <person name="Inagami T."/>
        </authorList>
    </citation>
    <scope>NUCLEOTIDE SEQUENCE [MRNA]</scope>
    <source>
        <strain>BALB/cJ</strain>
    </source>
</reference>
<reference key="3">
    <citation type="journal article" date="1996" name="Adv. Exp. Med. Biol.">
        <title>Molecular and functional characterization of angiotensin II AT2 receptor in neuroblastoma N1E-115 cells.</title>
        <authorList>
            <person name="Nahmias C."/>
            <person name="Cazaubon S.M."/>
            <person name="Sutren M."/>
            <person name="Masson M."/>
            <person name="Lazard D."/>
            <person name="Villageois P."/>
            <person name="Elbaz N."/>
            <person name="Strosberg A.D."/>
        </authorList>
    </citation>
    <scope>NUCLEOTIDE SEQUENCE [MRNA]</scope>
    <scope>FUNCTION</scope>
</reference>
<reference key="4">
    <citation type="journal article" date="1995" name="J. Biol. Chem.">
        <title>The growth-dependent expression of angiotensin II type 2 receptor is regulated by transcription factors interferon regulatory factor-1 and -2.</title>
        <authorList>
            <person name="Horiuchi M."/>
            <person name="Koike G."/>
            <person name="Yamada T."/>
            <person name="Mukoyama M."/>
            <person name="Nakajima M."/>
            <person name="Dzau V.J."/>
        </authorList>
    </citation>
    <scope>NUCLEOTIDE SEQUENCE [GENOMIC DNA]</scope>
    <source>
        <strain>BALB/cJ</strain>
        <tissue>Liver</tissue>
    </source>
</reference>
<reference key="5">
    <citation type="journal article" date="2005" name="Science">
        <title>The transcriptional landscape of the mammalian genome.</title>
        <authorList>
            <person name="Carninci P."/>
            <person name="Kasukawa T."/>
            <person name="Katayama S."/>
            <person name="Gough J."/>
            <person name="Frith M.C."/>
            <person name="Maeda N."/>
            <person name="Oyama R."/>
            <person name="Ravasi T."/>
            <person name="Lenhard B."/>
            <person name="Wells C."/>
            <person name="Kodzius R."/>
            <person name="Shimokawa K."/>
            <person name="Bajic V.B."/>
            <person name="Brenner S.E."/>
            <person name="Batalov S."/>
            <person name="Forrest A.R."/>
            <person name="Zavolan M."/>
            <person name="Davis M.J."/>
            <person name="Wilming L.G."/>
            <person name="Aidinis V."/>
            <person name="Allen J.E."/>
            <person name="Ambesi-Impiombato A."/>
            <person name="Apweiler R."/>
            <person name="Aturaliya R.N."/>
            <person name="Bailey T.L."/>
            <person name="Bansal M."/>
            <person name="Baxter L."/>
            <person name="Beisel K.W."/>
            <person name="Bersano T."/>
            <person name="Bono H."/>
            <person name="Chalk A.M."/>
            <person name="Chiu K.P."/>
            <person name="Choudhary V."/>
            <person name="Christoffels A."/>
            <person name="Clutterbuck D.R."/>
            <person name="Crowe M.L."/>
            <person name="Dalla E."/>
            <person name="Dalrymple B.P."/>
            <person name="de Bono B."/>
            <person name="Della Gatta G."/>
            <person name="di Bernardo D."/>
            <person name="Down T."/>
            <person name="Engstrom P."/>
            <person name="Fagiolini M."/>
            <person name="Faulkner G."/>
            <person name="Fletcher C.F."/>
            <person name="Fukushima T."/>
            <person name="Furuno M."/>
            <person name="Futaki S."/>
            <person name="Gariboldi M."/>
            <person name="Georgii-Hemming P."/>
            <person name="Gingeras T.R."/>
            <person name="Gojobori T."/>
            <person name="Green R.E."/>
            <person name="Gustincich S."/>
            <person name="Harbers M."/>
            <person name="Hayashi Y."/>
            <person name="Hensch T.K."/>
            <person name="Hirokawa N."/>
            <person name="Hill D."/>
            <person name="Huminiecki L."/>
            <person name="Iacono M."/>
            <person name="Ikeo K."/>
            <person name="Iwama A."/>
            <person name="Ishikawa T."/>
            <person name="Jakt M."/>
            <person name="Kanapin A."/>
            <person name="Katoh M."/>
            <person name="Kawasawa Y."/>
            <person name="Kelso J."/>
            <person name="Kitamura H."/>
            <person name="Kitano H."/>
            <person name="Kollias G."/>
            <person name="Krishnan S.P."/>
            <person name="Kruger A."/>
            <person name="Kummerfeld S.K."/>
            <person name="Kurochkin I.V."/>
            <person name="Lareau L.F."/>
            <person name="Lazarevic D."/>
            <person name="Lipovich L."/>
            <person name="Liu J."/>
            <person name="Liuni S."/>
            <person name="McWilliam S."/>
            <person name="Madan Babu M."/>
            <person name="Madera M."/>
            <person name="Marchionni L."/>
            <person name="Matsuda H."/>
            <person name="Matsuzawa S."/>
            <person name="Miki H."/>
            <person name="Mignone F."/>
            <person name="Miyake S."/>
            <person name="Morris K."/>
            <person name="Mottagui-Tabar S."/>
            <person name="Mulder N."/>
            <person name="Nakano N."/>
            <person name="Nakauchi H."/>
            <person name="Ng P."/>
            <person name="Nilsson R."/>
            <person name="Nishiguchi S."/>
            <person name="Nishikawa S."/>
            <person name="Nori F."/>
            <person name="Ohara O."/>
            <person name="Okazaki Y."/>
            <person name="Orlando V."/>
            <person name="Pang K.C."/>
            <person name="Pavan W.J."/>
            <person name="Pavesi G."/>
            <person name="Pesole G."/>
            <person name="Petrovsky N."/>
            <person name="Piazza S."/>
            <person name="Reed J."/>
            <person name="Reid J.F."/>
            <person name="Ring B.Z."/>
            <person name="Ringwald M."/>
            <person name="Rost B."/>
            <person name="Ruan Y."/>
            <person name="Salzberg S.L."/>
            <person name="Sandelin A."/>
            <person name="Schneider C."/>
            <person name="Schoenbach C."/>
            <person name="Sekiguchi K."/>
            <person name="Semple C.A."/>
            <person name="Seno S."/>
            <person name="Sessa L."/>
            <person name="Sheng Y."/>
            <person name="Shibata Y."/>
            <person name="Shimada H."/>
            <person name="Shimada K."/>
            <person name="Silva D."/>
            <person name="Sinclair B."/>
            <person name="Sperling S."/>
            <person name="Stupka E."/>
            <person name="Sugiura K."/>
            <person name="Sultana R."/>
            <person name="Takenaka Y."/>
            <person name="Taki K."/>
            <person name="Tammoja K."/>
            <person name="Tan S.L."/>
            <person name="Tang S."/>
            <person name="Taylor M.S."/>
            <person name="Tegner J."/>
            <person name="Teichmann S.A."/>
            <person name="Ueda H.R."/>
            <person name="van Nimwegen E."/>
            <person name="Verardo R."/>
            <person name="Wei C.L."/>
            <person name="Yagi K."/>
            <person name="Yamanishi H."/>
            <person name="Zabarovsky E."/>
            <person name="Zhu S."/>
            <person name="Zimmer A."/>
            <person name="Hide W."/>
            <person name="Bult C."/>
            <person name="Grimmond S.M."/>
            <person name="Teasdale R.D."/>
            <person name="Liu E.T."/>
            <person name="Brusic V."/>
            <person name="Quackenbush J."/>
            <person name="Wahlestedt C."/>
            <person name="Mattick J.S."/>
            <person name="Hume D.A."/>
            <person name="Kai C."/>
            <person name="Sasaki D."/>
            <person name="Tomaru Y."/>
            <person name="Fukuda S."/>
            <person name="Kanamori-Katayama M."/>
            <person name="Suzuki M."/>
            <person name="Aoki J."/>
            <person name="Arakawa T."/>
            <person name="Iida J."/>
            <person name="Imamura K."/>
            <person name="Itoh M."/>
            <person name="Kato T."/>
            <person name="Kawaji H."/>
            <person name="Kawagashira N."/>
            <person name="Kawashima T."/>
            <person name="Kojima M."/>
            <person name="Kondo S."/>
            <person name="Konno H."/>
            <person name="Nakano K."/>
            <person name="Ninomiya N."/>
            <person name="Nishio T."/>
            <person name="Okada M."/>
            <person name="Plessy C."/>
            <person name="Shibata K."/>
            <person name="Shiraki T."/>
            <person name="Suzuki S."/>
            <person name="Tagami M."/>
            <person name="Waki K."/>
            <person name="Watahiki A."/>
            <person name="Okamura-Oho Y."/>
            <person name="Suzuki H."/>
            <person name="Kawai J."/>
            <person name="Hayashizaki Y."/>
        </authorList>
    </citation>
    <scope>NUCLEOTIDE SEQUENCE [LARGE SCALE MRNA]</scope>
    <source>
        <strain>C57BL/6J</strain>
        <tissue>Head</tissue>
    </source>
</reference>
<reference key="6">
    <citation type="journal article" date="2004" name="Genome Res.">
        <title>The status, quality, and expansion of the NIH full-length cDNA project: the Mammalian Gene Collection (MGC).</title>
        <authorList>
            <consortium name="The MGC Project Team"/>
        </authorList>
    </citation>
    <scope>NUCLEOTIDE SEQUENCE [LARGE SCALE MRNA]</scope>
    <source>
        <strain>C57BL/6J</strain>
        <tissue>Mammary gland</tissue>
    </source>
</reference>
<reference key="7">
    <citation type="journal article" date="2001" name="Biochemistry">
        <title>Identification and function of disulfide bridges in the extracellular domains of the angiotensin II type 2 receptor.</title>
        <authorList>
            <person name="Heerding J.N."/>
            <person name="Hines J."/>
            <person name="Fluharty S.J."/>
            <person name="Yee D.K."/>
        </authorList>
    </citation>
    <scope>DISULFIDE BONDS</scope>
</reference>
<reference key="8">
    <citation type="journal article" date="2005" name="Arterioscler. Thromb. Vasc. Biol.">
        <title>Regulation of transport of the angiotensin AT2 receptor by a novel membrane-associated Golgi protein.</title>
        <authorList>
            <person name="Wruck C.J."/>
            <person name="Funke-Kaiser H."/>
            <person name="Pufe T."/>
            <person name="Kusserow H."/>
            <person name="Menk M."/>
            <person name="Schefe J.H."/>
            <person name="Kruse M.L."/>
            <person name="Stoll M."/>
            <person name="Unger T."/>
        </authorList>
    </citation>
    <scope>FUNCTION</scope>
    <scope>INTERACTION WITH MTUS1</scope>
    <scope>TISSUE SPECIFICITY</scope>
    <scope>SUBCELLULAR LOCATION</scope>
</reference>
<dbReference type="EMBL" id="S67465">
    <property type="protein sequence ID" value="AAB29336.1"/>
    <property type="molecule type" value="mRNA"/>
</dbReference>
<dbReference type="EMBL" id="U04828">
    <property type="protein sequence ID" value="AAC52128.1"/>
    <property type="molecule type" value="mRNA"/>
</dbReference>
<dbReference type="EMBL" id="U00766">
    <property type="protein sequence ID" value="AAC04933.1"/>
    <property type="molecule type" value="mRNA"/>
</dbReference>
<dbReference type="EMBL" id="L32840">
    <property type="protein sequence ID" value="AAB49539.1"/>
    <property type="status" value="ALT_INIT"/>
    <property type="molecule type" value="mRNA"/>
</dbReference>
<dbReference type="EMBL" id="U11073">
    <property type="protein sequence ID" value="AAA82184.1"/>
    <property type="molecule type" value="Genomic_DNA"/>
</dbReference>
<dbReference type="EMBL" id="AK086334">
    <property type="protein sequence ID" value="BAC39650.1"/>
    <property type="molecule type" value="mRNA"/>
</dbReference>
<dbReference type="EMBL" id="BC003811">
    <property type="protein sequence ID" value="AAH03811.1"/>
    <property type="molecule type" value="mRNA"/>
</dbReference>
<dbReference type="CCDS" id="CCDS40889.1"/>
<dbReference type="PIR" id="I48261">
    <property type="entry name" value="I48261"/>
</dbReference>
<dbReference type="RefSeq" id="NP_031455.1">
    <property type="nucleotide sequence ID" value="NM_007429.5"/>
</dbReference>
<dbReference type="SMR" id="P35374"/>
<dbReference type="BioGRID" id="198031">
    <property type="interactions" value="1"/>
</dbReference>
<dbReference type="CORUM" id="P35374"/>
<dbReference type="FunCoup" id="P35374">
    <property type="interactions" value="785"/>
</dbReference>
<dbReference type="STRING" id="10090.ENSMUSP00000086592"/>
<dbReference type="ChEMBL" id="CHEMBL4680025"/>
<dbReference type="GlyCosmos" id="P35374">
    <property type="glycosylation" value="5 sites, No reported glycans"/>
</dbReference>
<dbReference type="GlyGen" id="P35374">
    <property type="glycosylation" value="5 sites"/>
</dbReference>
<dbReference type="iPTMnet" id="P35374"/>
<dbReference type="PhosphoSitePlus" id="P35374"/>
<dbReference type="PaxDb" id="10090-ENSMUSP00000086592"/>
<dbReference type="ProteomicsDB" id="282044"/>
<dbReference type="Pumba" id="P35374"/>
<dbReference type="Antibodypedia" id="29644">
    <property type="antibodies" value="267 antibodies from 36 providers"/>
</dbReference>
<dbReference type="DNASU" id="11609"/>
<dbReference type="Ensembl" id="ENSMUST00000089188.9">
    <property type="protein sequence ID" value="ENSMUSP00000086592.3"/>
    <property type="gene ID" value="ENSMUSG00000068122.11"/>
</dbReference>
<dbReference type="GeneID" id="11609"/>
<dbReference type="KEGG" id="mmu:11609"/>
<dbReference type="UCSC" id="uc009suq.3">
    <property type="organism name" value="mouse"/>
</dbReference>
<dbReference type="AGR" id="MGI:87966"/>
<dbReference type="CTD" id="186"/>
<dbReference type="MGI" id="MGI:87966">
    <property type="gene designation" value="Agtr2"/>
</dbReference>
<dbReference type="VEuPathDB" id="HostDB:ENSMUSG00000068122"/>
<dbReference type="eggNOG" id="KOG3656">
    <property type="taxonomic scope" value="Eukaryota"/>
</dbReference>
<dbReference type="GeneTree" id="ENSGT01130000278303"/>
<dbReference type="HOGENOM" id="CLU_009579_8_3_1"/>
<dbReference type="InParanoid" id="P35374"/>
<dbReference type="OMA" id="TFNCSHK"/>
<dbReference type="OrthoDB" id="8804420at2759"/>
<dbReference type="PhylomeDB" id="P35374"/>
<dbReference type="TreeFam" id="TF330024"/>
<dbReference type="Reactome" id="R-MMU-375276">
    <property type="pathway name" value="Peptide ligand-binding receptors"/>
</dbReference>
<dbReference type="Reactome" id="R-MMU-418594">
    <property type="pathway name" value="G alpha (i) signalling events"/>
</dbReference>
<dbReference type="BioGRID-ORCS" id="11609">
    <property type="hits" value="0 hits in 78 CRISPR screens"/>
</dbReference>
<dbReference type="ChiTaRS" id="Agtr2">
    <property type="organism name" value="mouse"/>
</dbReference>
<dbReference type="PRO" id="PR:P35374"/>
<dbReference type="Proteomes" id="UP000000589">
    <property type="component" value="Chromosome X"/>
</dbReference>
<dbReference type="RNAct" id="P35374">
    <property type="molecule type" value="protein"/>
</dbReference>
<dbReference type="Bgee" id="ENSMUSG00000068122">
    <property type="expression patterns" value="Expressed in dermis and 114 other cell types or tissues"/>
</dbReference>
<dbReference type="GO" id="GO:0005886">
    <property type="term" value="C:plasma membrane"/>
    <property type="evidence" value="ECO:0007669"/>
    <property type="project" value="UniProtKB-SubCell"/>
</dbReference>
<dbReference type="GO" id="GO:0004945">
    <property type="term" value="F:angiotensin type II receptor activity"/>
    <property type="evidence" value="ECO:0000314"/>
    <property type="project" value="MGI"/>
</dbReference>
<dbReference type="GO" id="GO:0038166">
    <property type="term" value="P:angiotensin-activated signaling pathway"/>
    <property type="evidence" value="ECO:0000315"/>
    <property type="project" value="MGI"/>
</dbReference>
<dbReference type="GO" id="GO:0002033">
    <property type="term" value="P:angiotensin-mediated vasodilation involved in regulation of systemic arterial blood pressure"/>
    <property type="evidence" value="ECO:0000314"/>
    <property type="project" value="MGI"/>
</dbReference>
<dbReference type="GO" id="GO:0002035">
    <property type="term" value="P:brain renin-angiotensin system"/>
    <property type="evidence" value="ECO:0000314"/>
    <property type="project" value="MGI"/>
</dbReference>
<dbReference type="GO" id="GO:0007166">
    <property type="term" value="P:cell surface receptor signaling pathway"/>
    <property type="evidence" value="ECO:0007669"/>
    <property type="project" value="Ensembl"/>
</dbReference>
<dbReference type="GO" id="GO:0035640">
    <property type="term" value="P:exploration behavior"/>
    <property type="evidence" value="ECO:0000315"/>
    <property type="project" value="BHF-UCL"/>
</dbReference>
<dbReference type="GO" id="GO:0007199">
    <property type="term" value="P:G protein-coupled receptor signaling pathway coupled to cGMP nucleotide second messenger"/>
    <property type="evidence" value="ECO:0000314"/>
    <property type="project" value="BHF-UCL"/>
</dbReference>
<dbReference type="GO" id="GO:0006954">
    <property type="term" value="P:inflammatory response"/>
    <property type="evidence" value="ECO:0000316"/>
    <property type="project" value="MGI"/>
</dbReference>
<dbReference type="GO" id="GO:0010459">
    <property type="term" value="P:negative regulation of heart rate"/>
    <property type="evidence" value="ECO:0000315"/>
    <property type="project" value="BHF-UCL"/>
</dbReference>
<dbReference type="GO" id="GO:0051387">
    <property type="term" value="P:negative regulation of neurotrophin TRK receptor signaling pathway"/>
    <property type="evidence" value="ECO:0007669"/>
    <property type="project" value="Ensembl"/>
</dbReference>
<dbReference type="GO" id="GO:0051402">
    <property type="term" value="P:neuron apoptotic process"/>
    <property type="evidence" value="ECO:0000315"/>
    <property type="project" value="MGI"/>
</dbReference>
<dbReference type="GO" id="GO:0038060">
    <property type="term" value="P:nitric oxide-cGMP-mediated signaling"/>
    <property type="evidence" value="ECO:0000314"/>
    <property type="project" value="BHF-UCL"/>
</dbReference>
<dbReference type="GO" id="GO:0090190">
    <property type="term" value="P:positive regulation of branching involved in ureteric bud morphogenesis"/>
    <property type="evidence" value="ECO:0000315"/>
    <property type="project" value="UniProtKB"/>
</dbReference>
<dbReference type="GO" id="GO:0045893">
    <property type="term" value="P:positive regulation of DNA-templated transcription"/>
    <property type="evidence" value="ECO:0000315"/>
    <property type="project" value="UniProtKB"/>
</dbReference>
<dbReference type="GO" id="GO:2001238">
    <property type="term" value="P:positive regulation of extrinsic apoptotic signaling pathway"/>
    <property type="evidence" value="ECO:0007669"/>
    <property type="project" value="Ensembl"/>
</dbReference>
<dbReference type="GO" id="GO:0072300">
    <property type="term" value="P:positive regulation of metanephric glomerulus development"/>
    <property type="evidence" value="ECO:0000315"/>
    <property type="project" value="UniProtKB"/>
</dbReference>
<dbReference type="GO" id="GO:0035566">
    <property type="term" value="P:regulation of metanephros size"/>
    <property type="evidence" value="ECO:0000315"/>
    <property type="project" value="UniProtKB"/>
</dbReference>
<dbReference type="GO" id="GO:0001991">
    <property type="term" value="P:regulation of systemic arterial blood pressure by circulatory renin-angiotensin"/>
    <property type="evidence" value="ECO:0000315"/>
    <property type="project" value="BHF-UCL"/>
</dbReference>
<dbReference type="CDD" id="cd15191">
    <property type="entry name" value="7tmA_AT2R"/>
    <property type="match status" value="1"/>
</dbReference>
<dbReference type="FunFam" id="1.20.1070.10:FF:000161">
    <property type="entry name" value="type-2 angiotensin II receptor"/>
    <property type="match status" value="1"/>
</dbReference>
<dbReference type="Gene3D" id="1.20.1070.10">
    <property type="entry name" value="Rhodopsin 7-helix transmembrane proteins"/>
    <property type="match status" value="1"/>
</dbReference>
<dbReference type="InterPro" id="IPR000147">
    <property type="entry name" value="ATII_AT2_rcpt"/>
</dbReference>
<dbReference type="InterPro" id="IPR000248">
    <property type="entry name" value="ATII_rcpt"/>
</dbReference>
<dbReference type="InterPro" id="IPR050119">
    <property type="entry name" value="CCR1-9-like"/>
</dbReference>
<dbReference type="InterPro" id="IPR000276">
    <property type="entry name" value="GPCR_Rhodpsn"/>
</dbReference>
<dbReference type="InterPro" id="IPR017452">
    <property type="entry name" value="GPCR_Rhodpsn_7TM"/>
</dbReference>
<dbReference type="PANTHER" id="PTHR10489">
    <property type="entry name" value="CELL ADHESION MOLECULE"/>
    <property type="match status" value="1"/>
</dbReference>
<dbReference type="PANTHER" id="PTHR10489:SF952">
    <property type="entry name" value="TYPE-2 ANGIOTENSIN II RECEPTOR"/>
    <property type="match status" value="1"/>
</dbReference>
<dbReference type="Pfam" id="PF00001">
    <property type="entry name" value="7tm_1"/>
    <property type="match status" value="1"/>
</dbReference>
<dbReference type="PRINTS" id="PR00241">
    <property type="entry name" value="ANGIOTENSINR"/>
</dbReference>
<dbReference type="PRINTS" id="PR00636">
    <property type="entry name" value="ANGIOTENSN2R"/>
</dbReference>
<dbReference type="PRINTS" id="PR00237">
    <property type="entry name" value="GPCRRHODOPSN"/>
</dbReference>
<dbReference type="SUPFAM" id="SSF81321">
    <property type="entry name" value="Family A G protein-coupled receptor-like"/>
    <property type="match status" value="1"/>
</dbReference>
<dbReference type="PROSITE" id="PS00237">
    <property type="entry name" value="G_PROTEIN_RECEP_F1_1"/>
    <property type="match status" value="1"/>
</dbReference>
<dbReference type="PROSITE" id="PS50262">
    <property type="entry name" value="G_PROTEIN_RECEP_F1_2"/>
    <property type="match status" value="1"/>
</dbReference>
<evidence type="ECO:0000250" key="1">
    <source>
        <dbReference type="UniProtKB" id="P50052"/>
    </source>
</evidence>
<evidence type="ECO:0000255" key="2"/>
<evidence type="ECO:0000255" key="3">
    <source>
        <dbReference type="PROSITE-ProRule" id="PRU00521"/>
    </source>
</evidence>
<evidence type="ECO:0000269" key="4">
    <source>
    </source>
</evidence>
<evidence type="ECO:0000269" key="5">
    <source>
    </source>
</evidence>
<evidence type="ECO:0000269" key="6">
    <source>
    </source>
</evidence>
<evidence type="ECO:0000303" key="7">
    <source>
    </source>
</evidence>
<evidence type="ECO:0000303" key="8">
    <source>
    </source>
</evidence>
<evidence type="ECO:0000305" key="9"/>
<evidence type="ECO:0000312" key="10">
    <source>
        <dbReference type="MGI" id="MGI:87966"/>
    </source>
</evidence>
<accession>P35374</accession>
<protein>
    <recommendedName>
        <fullName>Type-2 angiotensin II receptor</fullName>
    </recommendedName>
    <alternativeName>
        <fullName evidence="7">Angiotensin II type-2 receptor</fullName>
        <shortName evidence="8">AT2 receptor</shortName>
    </alternativeName>
</protein>
<gene>
    <name evidence="10" type="primary">Agtr2</name>
</gene>
<proteinExistence type="evidence at protein level"/>
<name>AGTR2_MOUSE</name>
<organism>
    <name type="scientific">Mus musculus</name>
    <name type="common">Mouse</name>
    <dbReference type="NCBI Taxonomy" id="10090"/>
    <lineage>
        <taxon>Eukaryota</taxon>
        <taxon>Metazoa</taxon>
        <taxon>Chordata</taxon>
        <taxon>Craniata</taxon>
        <taxon>Vertebrata</taxon>
        <taxon>Euteleostomi</taxon>
        <taxon>Mammalia</taxon>
        <taxon>Eutheria</taxon>
        <taxon>Euarchontoglires</taxon>
        <taxon>Glires</taxon>
        <taxon>Rodentia</taxon>
        <taxon>Myomorpha</taxon>
        <taxon>Muroidea</taxon>
        <taxon>Muridae</taxon>
        <taxon>Murinae</taxon>
        <taxon>Mus</taxon>
        <taxon>Mus</taxon>
    </lineage>
</organism>
<sequence length="363" mass="41374">MKDNFSFAATSRNITSSRPFDNLNATGTNESAFNCSHKPSDKHLEAIPVLYYMIFVIGFAVNIVVVSLFCCQKGPKKVSSIYIFNLALADLLLLATLPLWATYYSYRYDWLFGPVMCKVFGSFLTLNMFASIFFITCMSVDRYQSVIYPFLSQRRNPWQASYVVPLVWCMACLSSLPTFYFRDVRTIEYLGVNACIMAFPPEKYAQWSAGIALMKNILGFIIPLIFIATCYFGIRKHLLKTNSYGKNRITRDQVLKMAAAVVLAFIICWLPFHVLTFLDALTWMGIINSCEVIAVIDLALPFAILLGFTNSCVNPFLYCFVGNRFQQKLRSVFRVPITWLQGKRETMSCRKGSSLREMDTFVS</sequence>
<keyword id="KW-1003">Cell membrane</keyword>
<keyword id="KW-1015">Disulfide bond</keyword>
<keyword id="KW-0297">G-protein coupled receptor</keyword>
<keyword id="KW-0325">Glycoprotein</keyword>
<keyword id="KW-0472">Membrane</keyword>
<keyword id="KW-0597">Phosphoprotein</keyword>
<keyword id="KW-0675">Receptor</keyword>
<keyword id="KW-1185">Reference proteome</keyword>
<keyword id="KW-0807">Transducer</keyword>
<keyword id="KW-0812">Transmembrane</keyword>
<keyword id="KW-1133">Transmembrane helix</keyword>